<keyword id="KW-0202">Cytokine</keyword>
<keyword id="KW-1015">Disulfide bond</keyword>
<keyword id="KW-0325">Glycoprotein</keyword>
<keyword id="KW-0339">Growth factor</keyword>
<keyword id="KW-1185">Reference proteome</keyword>
<keyword id="KW-0964">Secreted</keyword>
<keyword id="KW-0732">Signal</keyword>
<feature type="signal peptide" evidence="2">
    <location>
        <begin position="1"/>
        <end position="17"/>
    </location>
</feature>
<feature type="chain" id="PRO_0000005867" description="Granulocyte-macrophage colony-stimulating factor">
    <location>
        <begin position="18"/>
        <end position="144"/>
    </location>
</feature>
<feature type="glycosylation site" description="O-linked (GalNAc...) serine" evidence="1">
    <location>
        <position position="24"/>
    </location>
</feature>
<feature type="glycosylation site" description="O-linked (GalNAc...) threonine" evidence="1">
    <location>
        <position position="27"/>
    </location>
</feature>
<feature type="glycosylation site" description="N-linked (GlcNAc...) asparagine" evidence="2">
    <location>
        <position position="44"/>
    </location>
</feature>
<feature type="glycosylation site" description="N-linked (GlcNAc...) asparagine" evidence="2">
    <location>
        <position position="47"/>
    </location>
</feature>
<feature type="glycosylation site" description="N-linked (GlcNAc...) asparagine" evidence="2">
    <location>
        <position position="54"/>
    </location>
</feature>
<feature type="disulfide bond" evidence="1">
    <location>
        <begin position="71"/>
        <end position="113"/>
    </location>
</feature>
<feature type="disulfide bond" evidence="1">
    <location>
        <begin position="105"/>
        <end position="138"/>
    </location>
</feature>
<feature type="sequence conflict" description="In Ref. 3; BAA04649." evidence="3" ref="3">
    <original>V</original>
    <variation>I</variation>
    <location>
        <position position="59"/>
    </location>
</feature>
<feature type="sequence conflict" description="In Ref. 3; BAA04649." evidence="3" ref="3">
    <original>G</original>
    <variation>E</variation>
    <location>
        <position position="140"/>
    </location>
</feature>
<feature type="sequence conflict" description="In Ref. 3; BAA04649." evidence="3" ref="3">
    <original>VK</original>
    <variation>AQ</variation>
    <location>
        <begin position="142"/>
        <end position="143"/>
    </location>
</feature>
<name>CSF2_PIG</name>
<proteinExistence type="evidence at transcript level"/>
<sequence length="144" mass="16254">MWLQNLLLLGTVVCSISAPTRPPSPVTRPWQHVDAIKEALSLLNNSNDTAAVMNETVDVVCEMFDPQEPTCVQTRLNLYKQGLRGSLTRLKSPLTLLAKHYEQHCPLTEETSCETQSITFKSFKDSLNKFLFTIPFDCWGPVKK</sequence>
<evidence type="ECO:0000250" key="1"/>
<evidence type="ECO:0000255" key="2"/>
<evidence type="ECO:0000305" key="3"/>
<reference key="1">
    <citation type="submission" date="1996-07" db="EMBL/GenBank/DDBJ databases">
        <authorList>
            <person name="Foss D.L."/>
            <person name="Murtaugh M.P."/>
        </authorList>
    </citation>
    <scope>NUCLEOTIDE SEQUENCE [MRNA]</scope>
    <source>
        <tissue>Spleen</tissue>
    </source>
</reference>
<reference key="2">
    <citation type="submission" date="1996-08" db="EMBL/GenBank/DDBJ databases">
        <authorList>
            <person name="Gloster S.E."/>
            <person name="Sandeman R.M."/>
            <person name="Strom A.D.G."/>
        </authorList>
    </citation>
    <scope>NUCLEOTIDE SEQUENCE [GENOMIC DNA]</scope>
</reference>
<reference key="3">
    <citation type="journal article" date="1995" name="Immunol. Cell Biol.">
        <title>cDNA cloning of porcine granulocyte-macrophage colony-stimulating factor.</title>
        <authorList>
            <person name="Inumaru S."/>
            <person name="Takamatsu H."/>
        </authorList>
    </citation>
    <scope>NUCLEOTIDE SEQUENCE [MRNA]</scope>
</reference>
<reference key="4">
    <citation type="submission" date="2002-05" db="EMBL/GenBank/DDBJ databases">
        <title>Cloning of porcine granulocyte macrophage-colony stimulating factor in alveolar macrophages.</title>
        <authorList>
            <person name="Cho Y.W."/>
            <person name="Choi I.-S."/>
            <person name="Yoo H.S."/>
        </authorList>
    </citation>
    <scope>NUCLEOTIDE SEQUENCE [MRNA]</scope>
</reference>
<protein>
    <recommendedName>
        <fullName>Granulocyte-macrophage colony-stimulating factor</fullName>
        <shortName>GM-CSF</shortName>
    </recommendedName>
    <alternativeName>
        <fullName>Colony-stimulating factor</fullName>
        <shortName>CSF</shortName>
    </alternativeName>
</protein>
<organism>
    <name type="scientific">Sus scrofa</name>
    <name type="common">Pig</name>
    <dbReference type="NCBI Taxonomy" id="9823"/>
    <lineage>
        <taxon>Eukaryota</taxon>
        <taxon>Metazoa</taxon>
        <taxon>Chordata</taxon>
        <taxon>Craniata</taxon>
        <taxon>Vertebrata</taxon>
        <taxon>Euteleostomi</taxon>
        <taxon>Mammalia</taxon>
        <taxon>Eutheria</taxon>
        <taxon>Laurasiatheria</taxon>
        <taxon>Artiodactyla</taxon>
        <taxon>Suina</taxon>
        <taxon>Suidae</taxon>
        <taxon>Sus</taxon>
    </lineage>
</organism>
<dbReference type="EMBL" id="U61139">
    <property type="protein sequence ID" value="AAB03867.1"/>
    <property type="molecule type" value="mRNA"/>
</dbReference>
<dbReference type="EMBL" id="U67318">
    <property type="protein sequence ID" value="AAB49939.1"/>
    <property type="molecule type" value="Genomic_DNA"/>
</dbReference>
<dbReference type="EMBL" id="U67175">
    <property type="protein sequence ID" value="AAB06854.1"/>
    <property type="molecule type" value="mRNA"/>
</dbReference>
<dbReference type="EMBL" id="D21074">
    <property type="protein sequence ID" value="BAA04649.1"/>
    <property type="molecule type" value="mRNA"/>
</dbReference>
<dbReference type="EMBL" id="AY116504">
    <property type="protein sequence ID" value="AAM48280.1"/>
    <property type="molecule type" value="mRNA"/>
</dbReference>
<dbReference type="RefSeq" id="NP_999283.1">
    <property type="nucleotide sequence ID" value="NM_214118.2"/>
</dbReference>
<dbReference type="SMR" id="Q29118"/>
<dbReference type="FunCoup" id="Q29118">
    <property type="interactions" value="202"/>
</dbReference>
<dbReference type="STRING" id="9823.ENSSSCP00000020413"/>
<dbReference type="GlyCosmos" id="Q29118">
    <property type="glycosylation" value="5 sites, No reported glycans"/>
</dbReference>
<dbReference type="GlyGen" id="Q29118">
    <property type="glycosylation" value="5 sites"/>
</dbReference>
<dbReference type="PaxDb" id="9823-ENSSSCP00000020413"/>
<dbReference type="Ensembl" id="ENSSSCT00015040085.1">
    <property type="protein sequence ID" value="ENSSSCP00015015867.1"/>
    <property type="gene ID" value="ENSSSCG00015030234.1"/>
</dbReference>
<dbReference type="Ensembl" id="ENSSSCT00025059383.1">
    <property type="protein sequence ID" value="ENSSSCP00025025192.1"/>
    <property type="gene ID" value="ENSSSCG00025043767.1"/>
</dbReference>
<dbReference type="Ensembl" id="ENSSSCT00065069179.1">
    <property type="protein sequence ID" value="ENSSSCP00065030133.1"/>
    <property type="gene ID" value="ENSSSCG00065050499.1"/>
</dbReference>
<dbReference type="Ensembl" id="ENSSSCT00070037176.1">
    <property type="protein sequence ID" value="ENSSSCP00070031092.1"/>
    <property type="gene ID" value="ENSSSCG00070018837.1"/>
</dbReference>
<dbReference type="Ensembl" id="ENSSSCT00090047410">
    <property type="protein sequence ID" value="ENSSSCP00090029463"/>
    <property type="gene ID" value="ENSSSCG00090026799"/>
</dbReference>
<dbReference type="Ensembl" id="ENSSSCT00105062832">
    <property type="protein sequence ID" value="ENSSSCP00105044653"/>
    <property type="gene ID" value="ENSSSCG00105033038"/>
</dbReference>
<dbReference type="Ensembl" id="ENSSSCT00110020466">
    <property type="protein sequence ID" value="ENSSSCP00110013775"/>
    <property type="gene ID" value="ENSSSCG00110010682"/>
</dbReference>
<dbReference type="Ensembl" id="ENSSSCT00130064466">
    <property type="protein sequence ID" value="ENSSSCP00130046243"/>
    <property type="gene ID" value="ENSSSCG00130032999"/>
</dbReference>
<dbReference type="GeneID" id="397208"/>
<dbReference type="KEGG" id="ssc:397208"/>
<dbReference type="CTD" id="1437"/>
<dbReference type="eggNOG" id="ENOG502TDUI">
    <property type="taxonomic scope" value="Eukaryota"/>
</dbReference>
<dbReference type="InParanoid" id="Q29118"/>
<dbReference type="OrthoDB" id="9633166at2759"/>
<dbReference type="Reactome" id="R-SSC-512988">
    <property type="pathway name" value="Interleukin-3, Interleukin-5 and GM-CSF signaling"/>
</dbReference>
<dbReference type="Reactome" id="R-SSC-5673001">
    <property type="pathway name" value="RAF/MAP kinase cascade"/>
</dbReference>
<dbReference type="Reactome" id="R-SSC-912526">
    <property type="pathway name" value="Interleukin receptor SHC signaling"/>
</dbReference>
<dbReference type="Proteomes" id="UP000008227">
    <property type="component" value="Unplaced"/>
</dbReference>
<dbReference type="Proteomes" id="UP000314985">
    <property type="component" value="Chromosome 2"/>
</dbReference>
<dbReference type="Proteomes" id="UP000694570">
    <property type="component" value="Unplaced"/>
</dbReference>
<dbReference type="Proteomes" id="UP000694571">
    <property type="component" value="Unplaced"/>
</dbReference>
<dbReference type="Proteomes" id="UP000694720">
    <property type="component" value="Unplaced"/>
</dbReference>
<dbReference type="Proteomes" id="UP000694722">
    <property type="component" value="Unplaced"/>
</dbReference>
<dbReference type="Proteomes" id="UP000694723">
    <property type="component" value="Unplaced"/>
</dbReference>
<dbReference type="Proteomes" id="UP000694724">
    <property type="component" value="Unplaced"/>
</dbReference>
<dbReference type="Proteomes" id="UP000694725">
    <property type="component" value="Unplaced"/>
</dbReference>
<dbReference type="Proteomes" id="UP000694726">
    <property type="component" value="Unplaced"/>
</dbReference>
<dbReference type="Proteomes" id="UP000694727">
    <property type="component" value="Unplaced"/>
</dbReference>
<dbReference type="Proteomes" id="UP000694728">
    <property type="component" value="Unplaced"/>
</dbReference>
<dbReference type="GO" id="GO:0005615">
    <property type="term" value="C:extracellular space"/>
    <property type="evidence" value="ECO:0000250"/>
    <property type="project" value="UniProtKB"/>
</dbReference>
<dbReference type="GO" id="GO:0005125">
    <property type="term" value="F:cytokine activity"/>
    <property type="evidence" value="ECO:0000250"/>
    <property type="project" value="UniProtKB"/>
</dbReference>
<dbReference type="GO" id="GO:0005129">
    <property type="term" value="F:granulocyte macrophage colony-stimulating factor receptor binding"/>
    <property type="evidence" value="ECO:0007669"/>
    <property type="project" value="InterPro"/>
</dbReference>
<dbReference type="GO" id="GO:0008083">
    <property type="term" value="F:growth factor activity"/>
    <property type="evidence" value="ECO:0007669"/>
    <property type="project" value="UniProtKB-KW"/>
</dbReference>
<dbReference type="GO" id="GO:0006955">
    <property type="term" value="P:immune response"/>
    <property type="evidence" value="ECO:0007669"/>
    <property type="project" value="InterPro"/>
</dbReference>
<dbReference type="GO" id="GO:0072651">
    <property type="term" value="P:interferon-tau production"/>
    <property type="evidence" value="ECO:0000315"/>
    <property type="project" value="AgBase"/>
</dbReference>
<dbReference type="GO" id="GO:0030099">
    <property type="term" value="P:myeloid cell differentiation"/>
    <property type="evidence" value="ECO:0000318"/>
    <property type="project" value="GO_Central"/>
</dbReference>
<dbReference type="GO" id="GO:0070374">
    <property type="term" value="P:positive regulation of ERK1 and ERK2 cascade"/>
    <property type="evidence" value="ECO:0000315"/>
    <property type="project" value="GO_Central"/>
</dbReference>
<dbReference type="GO" id="GO:0051897">
    <property type="term" value="P:positive regulation of phosphatidylinositol 3-kinase/protein kinase B signal transduction"/>
    <property type="evidence" value="ECO:0000315"/>
    <property type="project" value="GO_Central"/>
</dbReference>
<dbReference type="GO" id="GO:1904075">
    <property type="term" value="P:positive regulation of trophectodermal cell proliferation"/>
    <property type="evidence" value="ECO:0000315"/>
    <property type="project" value="AgBase"/>
</dbReference>
<dbReference type="GO" id="GO:0031929">
    <property type="term" value="P:TOR signaling"/>
    <property type="evidence" value="ECO:0000315"/>
    <property type="project" value="GO_Central"/>
</dbReference>
<dbReference type="CDD" id="cd00040">
    <property type="entry name" value="CSF2"/>
    <property type="match status" value="1"/>
</dbReference>
<dbReference type="FunFam" id="1.20.1250.10:FF:000028">
    <property type="entry name" value="Granulocyte-macrophage colony-stimulating factor"/>
    <property type="match status" value="1"/>
</dbReference>
<dbReference type="Gene3D" id="1.20.1250.10">
    <property type="match status" value="1"/>
</dbReference>
<dbReference type="InterPro" id="IPR009079">
    <property type="entry name" value="4_helix_cytokine-like_core"/>
</dbReference>
<dbReference type="InterPro" id="IPR000773">
    <property type="entry name" value="GM_colony-stim-fac"/>
</dbReference>
<dbReference type="PANTHER" id="PTHR10059:SF0">
    <property type="entry name" value="GRANULOCYTE-MACROPHAGE COLONY-STIMULATING FACTOR"/>
    <property type="match status" value="1"/>
</dbReference>
<dbReference type="PANTHER" id="PTHR10059">
    <property type="entry name" value="GRANULOCYTE-MACROPHAGE COLONY-STIMULATING FACTOR GM-CSF"/>
    <property type="match status" value="1"/>
</dbReference>
<dbReference type="Pfam" id="PF01109">
    <property type="entry name" value="GM_CSF"/>
    <property type="match status" value="1"/>
</dbReference>
<dbReference type="PRINTS" id="PR00693">
    <property type="entry name" value="GMCSFACTOR"/>
</dbReference>
<dbReference type="SMART" id="SM00040">
    <property type="entry name" value="CSF2"/>
    <property type="match status" value="1"/>
</dbReference>
<dbReference type="SUPFAM" id="SSF47266">
    <property type="entry name" value="4-helical cytokines"/>
    <property type="match status" value="1"/>
</dbReference>
<dbReference type="PROSITE" id="PS00702">
    <property type="entry name" value="GM_CSF"/>
    <property type="match status" value="1"/>
</dbReference>
<gene>
    <name type="primary">CSF2</name>
</gene>
<accession>Q29118</accession>
<accession>Q29046</accession>
<comment type="function">
    <text evidence="1">Cytokine that stimulates the growth and differentiation of hematopoietic precursor cells from various lineages, including granulocytes, macrophages, eosinophils and erythrocytes.</text>
</comment>
<comment type="subunit">
    <text evidence="1">Monomer. The signaling GM-CSF receptor complex is a dodecamer of two head-to-head hexamers of two alpha, two beta, and two ligand subunits (By similarity).</text>
</comment>
<comment type="subcellular location">
    <subcellularLocation>
        <location>Secreted</location>
    </subcellularLocation>
</comment>
<comment type="similarity">
    <text evidence="3">Belongs to the GM-CSF family.</text>
</comment>